<organism>
    <name type="scientific">Thermoanaerobacterium thermosaccharolyticum (strain ATCC 7956 / DSM 571 / NCIMB 9385 / NCA 3814 / NCTC 13789 / WDCM 00135 / 2032)</name>
    <name type="common">Clostridium thermosaccharolyticum</name>
    <dbReference type="NCBI Taxonomy" id="580327"/>
    <lineage>
        <taxon>Bacteria</taxon>
        <taxon>Bacillati</taxon>
        <taxon>Bacillota</taxon>
        <taxon>Clostridia</taxon>
        <taxon>Thermoanaerobacterales</taxon>
        <taxon>Thermoanaerobacteraceae</taxon>
        <taxon>Thermoanaerobacterium</taxon>
    </lineage>
</organism>
<evidence type="ECO:0000250" key="1"/>
<evidence type="ECO:0000305" key="2"/>
<accession>P97089</accession>
<accession>D9TPZ9</accession>
<accession>P71152</accession>
<feature type="chain" id="PRO_0000167878" description="Electron transfer flavoprotein subunit beta">
    <location>
        <begin position="1"/>
        <end position="260"/>
    </location>
</feature>
<reference key="1">
    <citation type="submission" date="1997-03" db="EMBL/GenBank/DDBJ databases">
        <authorList>
            <person name="van Rinsum A."/>
            <person name="Bronnenmeier K."/>
            <person name="Staudenbauer W.L."/>
        </authorList>
    </citation>
    <scope>NUCLEOTIDE SEQUENCE [GENOMIC DNA]</scope>
    <source>
        <strain>ATCC 7956 / DSM 571 / NCIMB 9385 / NCA 3814 / NCTC 13789 / WDCM 00135 / 2032</strain>
    </source>
</reference>
<reference key="2">
    <citation type="submission" date="2010-08" db="EMBL/GenBank/DDBJ databases">
        <title>Complete sequence of Thermoanaerobacterium thermosaccharolyticum DSM 571.</title>
        <authorList>
            <consortium name="US DOE Joint Genome Institute"/>
            <person name="Lucas S."/>
            <person name="Copeland A."/>
            <person name="Lapidus A."/>
            <person name="Cheng J.-F."/>
            <person name="Bruce D."/>
            <person name="Goodwin L."/>
            <person name="Pitluck S."/>
            <person name="Teshima H."/>
            <person name="Detter J.C."/>
            <person name="Han C."/>
            <person name="Tapia R."/>
            <person name="Land M."/>
            <person name="Hauser L."/>
            <person name="Chang Y.-J."/>
            <person name="Jeffries C."/>
            <person name="Kyrpides N."/>
            <person name="Ivanova N."/>
            <person name="Mikhailova N."/>
            <person name="Hemme C.L."/>
            <person name="Woyke T."/>
        </authorList>
    </citation>
    <scope>NUCLEOTIDE SEQUENCE [LARGE SCALE GENOMIC DNA]</scope>
    <source>
        <strain>ATCC 7956 / DSM 571 / NCIMB 9385 / NCA 3814 / NCTC 13789 / WDCM 00135 / 2032</strain>
    </source>
</reference>
<gene>
    <name type="primary">etfB</name>
    <name type="ordered locus">Tthe_1659</name>
</gene>
<sequence>MNILVLIKQVPDTNEVRIDPVTKTLIREGVPSIINPDDKNALEEAIRIREKVGGKVTVISMGPTQAEVALREALAMGADEAYLLTDRAFAGADTYATAKALSKAIEKFQYDIVFCGRQAIDGDTAQVGPQIAEQLDIPQVTYVRKVEIEGDKLIVERALEDGYEIIEVKTPVLLTAIKELNVPRYPSIKGIFNAYNKKEVKILTADDLEVDKNELGLKGSPTKVVATSTPNTERAGEIFTGNIKEAVQNLVERLNSRHVI</sequence>
<comment type="function">
    <text evidence="1">The electron transfer flavoprotein serves as a specific electron acceptor for other dehydrogenases. It transfers the electrons to the main respiratory chain via ETF-ubiquinone oxidoreductase (ETF dehydrogenase) (By similarity).</text>
</comment>
<comment type="cofactor">
    <cofactor evidence="1">
        <name>FAD</name>
        <dbReference type="ChEBI" id="CHEBI:57692"/>
    </cofactor>
    <text evidence="1">Binds 1 FAD per dimer.</text>
</comment>
<comment type="cofactor">
    <cofactor evidence="1">
        <name>AMP</name>
        <dbReference type="ChEBI" id="CHEBI:456215"/>
    </cofactor>
    <text evidence="1">Binds 1 AMP per subunit.</text>
</comment>
<comment type="subunit">
    <text>Heterodimer of an alpha and a beta subunit.</text>
</comment>
<comment type="similarity">
    <text evidence="2">Belongs to the ETF beta-subunit/FixA family.</text>
</comment>
<name>ETFB_THETC</name>
<keyword id="KW-0249">Electron transport</keyword>
<keyword id="KW-0274">FAD</keyword>
<keyword id="KW-0285">Flavoprotein</keyword>
<keyword id="KW-1185">Reference proteome</keyword>
<keyword id="KW-0813">Transport</keyword>
<dbReference type="EMBL" id="Z92974">
    <property type="protein sequence ID" value="CAB07497.1"/>
    <property type="molecule type" value="Genomic_DNA"/>
</dbReference>
<dbReference type="EMBL" id="Z82038">
    <property type="protein sequence ID" value="CAB04790.1"/>
    <property type="molecule type" value="Genomic_DNA"/>
</dbReference>
<dbReference type="EMBL" id="CP002171">
    <property type="protein sequence ID" value="ADL69168.1"/>
    <property type="molecule type" value="Genomic_DNA"/>
</dbReference>
<dbReference type="PIR" id="T45287">
    <property type="entry name" value="T45287"/>
</dbReference>
<dbReference type="RefSeq" id="WP_013298135.1">
    <property type="nucleotide sequence ID" value="NC_014410.1"/>
</dbReference>
<dbReference type="SMR" id="P97089"/>
<dbReference type="STRING" id="580327.Tthe_1659"/>
<dbReference type="GeneID" id="93864495"/>
<dbReference type="KEGG" id="ttm:Tthe_1659"/>
<dbReference type="eggNOG" id="COG2086">
    <property type="taxonomic scope" value="Bacteria"/>
</dbReference>
<dbReference type="HOGENOM" id="CLU_060196_2_1_9"/>
<dbReference type="OrthoDB" id="9804960at2"/>
<dbReference type="Proteomes" id="UP000001626">
    <property type="component" value="Chromosome"/>
</dbReference>
<dbReference type="GO" id="GO:0009055">
    <property type="term" value="F:electron transfer activity"/>
    <property type="evidence" value="ECO:0007669"/>
    <property type="project" value="InterPro"/>
</dbReference>
<dbReference type="CDD" id="cd01714">
    <property type="entry name" value="ETF_beta"/>
    <property type="match status" value="1"/>
</dbReference>
<dbReference type="Gene3D" id="3.40.50.620">
    <property type="entry name" value="HUPs"/>
    <property type="match status" value="1"/>
</dbReference>
<dbReference type="InterPro" id="IPR000049">
    <property type="entry name" value="ET-Flavoprotein_bsu_CS"/>
</dbReference>
<dbReference type="InterPro" id="IPR014730">
    <property type="entry name" value="ETF_a/b_N"/>
</dbReference>
<dbReference type="InterPro" id="IPR012255">
    <property type="entry name" value="ETF_b"/>
</dbReference>
<dbReference type="InterPro" id="IPR033948">
    <property type="entry name" value="ETF_beta_N"/>
</dbReference>
<dbReference type="InterPro" id="IPR014729">
    <property type="entry name" value="Rossmann-like_a/b/a_fold"/>
</dbReference>
<dbReference type="PANTHER" id="PTHR21294">
    <property type="entry name" value="ELECTRON TRANSFER FLAVOPROTEIN BETA-SUBUNIT"/>
    <property type="match status" value="1"/>
</dbReference>
<dbReference type="PANTHER" id="PTHR21294:SF17">
    <property type="entry name" value="PROTEIN FIXA"/>
    <property type="match status" value="1"/>
</dbReference>
<dbReference type="Pfam" id="PF01012">
    <property type="entry name" value="ETF"/>
    <property type="match status" value="1"/>
</dbReference>
<dbReference type="PIRSF" id="PIRSF000090">
    <property type="entry name" value="Beta-ETF"/>
    <property type="match status" value="1"/>
</dbReference>
<dbReference type="SMART" id="SM00893">
    <property type="entry name" value="ETF"/>
    <property type="match status" value="1"/>
</dbReference>
<dbReference type="SUPFAM" id="SSF52402">
    <property type="entry name" value="Adenine nucleotide alpha hydrolases-like"/>
    <property type="match status" value="1"/>
</dbReference>
<dbReference type="PROSITE" id="PS01065">
    <property type="entry name" value="ETF_BETA"/>
    <property type="match status" value="1"/>
</dbReference>
<protein>
    <recommendedName>
        <fullName>Electron transfer flavoprotein subunit beta</fullName>
        <shortName>Beta-ETF</shortName>
    </recommendedName>
    <alternativeName>
        <fullName>Electron transfer flavoprotein small subunit</fullName>
        <shortName>ETFSS</shortName>
    </alternativeName>
</protein>
<proteinExistence type="inferred from homology"/>